<comment type="function">
    <text evidence="1">NDH-1 shuttles electrons from NADH, via FMN and iron-sulfur (Fe-S) centers, to quinones in the respiratory chain. The immediate electron acceptor for the enzyme in this species is believed to be ubiquinone. Couples the redox reaction to proton translocation (for every two electrons transferred, four hydrogen ions are translocated across the cytoplasmic membrane), and thus conserves the redox energy in a proton gradient. This subunit may bind ubiquinone.</text>
</comment>
<comment type="catalytic activity">
    <reaction evidence="1">
        <text>a quinone + NADH + 5 H(+)(in) = a quinol + NAD(+) + 4 H(+)(out)</text>
        <dbReference type="Rhea" id="RHEA:57888"/>
        <dbReference type="ChEBI" id="CHEBI:15378"/>
        <dbReference type="ChEBI" id="CHEBI:24646"/>
        <dbReference type="ChEBI" id="CHEBI:57540"/>
        <dbReference type="ChEBI" id="CHEBI:57945"/>
        <dbReference type="ChEBI" id="CHEBI:132124"/>
    </reaction>
</comment>
<comment type="subunit">
    <text evidence="1">NDH-1 is composed of 14 different subunits. Subunits NuoA, H, J, K, L, M, N constitute the membrane sector of the complex.</text>
</comment>
<comment type="subcellular location">
    <subcellularLocation>
        <location evidence="1">Cell inner membrane</location>
        <topology evidence="1">Multi-pass membrane protein</topology>
    </subcellularLocation>
</comment>
<comment type="similarity">
    <text evidence="1">Belongs to the complex I subunit 1 family.</text>
</comment>
<proteinExistence type="inferred from homology"/>
<reference key="1">
    <citation type="submission" date="2006-12" db="EMBL/GenBank/DDBJ databases">
        <title>Complete sequence of chromosome 1 of Acidovorax sp. JS42.</title>
        <authorList>
            <person name="Copeland A."/>
            <person name="Lucas S."/>
            <person name="Lapidus A."/>
            <person name="Barry K."/>
            <person name="Detter J.C."/>
            <person name="Glavina del Rio T."/>
            <person name="Dalin E."/>
            <person name="Tice H."/>
            <person name="Pitluck S."/>
            <person name="Chertkov O."/>
            <person name="Brettin T."/>
            <person name="Bruce D."/>
            <person name="Han C."/>
            <person name="Tapia R."/>
            <person name="Gilna P."/>
            <person name="Schmutz J."/>
            <person name="Larimer F."/>
            <person name="Land M."/>
            <person name="Hauser L."/>
            <person name="Kyrpides N."/>
            <person name="Kim E."/>
            <person name="Stahl D."/>
            <person name="Richardson P."/>
        </authorList>
    </citation>
    <scope>NUCLEOTIDE SEQUENCE [LARGE SCALE GENOMIC DNA]</scope>
    <source>
        <strain>JS42</strain>
    </source>
</reference>
<accession>A1W4M9</accession>
<organism>
    <name type="scientific">Acidovorax sp. (strain JS42)</name>
    <dbReference type="NCBI Taxonomy" id="232721"/>
    <lineage>
        <taxon>Bacteria</taxon>
        <taxon>Pseudomonadati</taxon>
        <taxon>Pseudomonadota</taxon>
        <taxon>Betaproteobacteria</taxon>
        <taxon>Burkholderiales</taxon>
        <taxon>Comamonadaceae</taxon>
        <taxon>Acidovorax</taxon>
    </lineage>
</organism>
<gene>
    <name evidence="1" type="primary">nuoH</name>
    <name type="ordered locus">Ajs_0964</name>
</gene>
<keyword id="KW-0997">Cell inner membrane</keyword>
<keyword id="KW-1003">Cell membrane</keyword>
<keyword id="KW-0472">Membrane</keyword>
<keyword id="KW-0520">NAD</keyword>
<keyword id="KW-0874">Quinone</keyword>
<keyword id="KW-1278">Translocase</keyword>
<keyword id="KW-0812">Transmembrane</keyword>
<keyword id="KW-1133">Transmembrane helix</keyword>
<keyword id="KW-0830">Ubiquinone</keyword>
<protein>
    <recommendedName>
        <fullName evidence="1">NADH-quinone oxidoreductase subunit H</fullName>
        <ecNumber evidence="1">7.1.1.-</ecNumber>
    </recommendedName>
    <alternativeName>
        <fullName evidence="1">NADH dehydrogenase I subunit H</fullName>
    </alternativeName>
    <alternativeName>
        <fullName evidence="1">NDH-1 subunit H</fullName>
    </alternativeName>
</protein>
<sequence length="358" mass="39575">MIDAIYNGGLNLVAASWWTGAAWPVIWNLIKIICVVLPLLGAVAYLTLWERKLLGFMQVRFGPNRVGPFGLLQPIADALKLLTKELIQPAAAAKGLFYLGPVMAIMPALGAWAVIPFGPDLALANVNAGLLLVMAITSIEVYGVIIAGWASNSKYAFLGALRASAQMVSYEIAMGFCFLVVIMVSGSMNLTEIVAVQGRGTMTDMGLGFLSWNWLPLFPIFIVYLISVVAEVNRHPFDVVEGEAEIVAGHMVEYSGMGFAIFFLAEYASMWLVSILAVVMFLGGWLPPFDALGFIPGWIWLGIKTFLVVSMFIWIRATFPRFRYDQIMRLGWKIFIPVTLVWLLVVGAWLLSPWNIWK</sequence>
<feature type="chain" id="PRO_0000298788" description="NADH-quinone oxidoreductase subunit H">
    <location>
        <begin position="1"/>
        <end position="358"/>
    </location>
</feature>
<feature type="transmembrane region" description="Helical" evidence="1">
    <location>
        <begin position="29"/>
        <end position="49"/>
    </location>
</feature>
<feature type="transmembrane region" description="Helical" evidence="1">
    <location>
        <begin position="95"/>
        <end position="115"/>
    </location>
</feature>
<feature type="transmembrane region" description="Helical" evidence="1">
    <location>
        <begin position="130"/>
        <end position="150"/>
    </location>
</feature>
<feature type="transmembrane region" description="Helical" evidence="1">
    <location>
        <begin position="176"/>
        <end position="196"/>
    </location>
</feature>
<feature type="transmembrane region" description="Helical" evidence="1">
    <location>
        <begin position="206"/>
        <end position="226"/>
    </location>
</feature>
<feature type="transmembrane region" description="Helical" evidence="1">
    <location>
        <begin position="258"/>
        <end position="280"/>
    </location>
</feature>
<feature type="transmembrane region" description="Helical" evidence="1">
    <location>
        <begin position="297"/>
        <end position="317"/>
    </location>
</feature>
<feature type="transmembrane region" description="Helical" evidence="1">
    <location>
        <begin position="334"/>
        <end position="354"/>
    </location>
</feature>
<evidence type="ECO:0000255" key="1">
    <source>
        <dbReference type="HAMAP-Rule" id="MF_01350"/>
    </source>
</evidence>
<dbReference type="EC" id="7.1.1.-" evidence="1"/>
<dbReference type="EMBL" id="CP000539">
    <property type="protein sequence ID" value="ABM41204.1"/>
    <property type="molecule type" value="Genomic_DNA"/>
</dbReference>
<dbReference type="SMR" id="A1W4M9"/>
<dbReference type="STRING" id="232721.Ajs_0964"/>
<dbReference type="KEGG" id="ajs:Ajs_0964"/>
<dbReference type="eggNOG" id="COG1005">
    <property type="taxonomic scope" value="Bacteria"/>
</dbReference>
<dbReference type="HOGENOM" id="CLU_015134_0_1_4"/>
<dbReference type="Proteomes" id="UP000000645">
    <property type="component" value="Chromosome"/>
</dbReference>
<dbReference type="GO" id="GO:0005886">
    <property type="term" value="C:plasma membrane"/>
    <property type="evidence" value="ECO:0007669"/>
    <property type="project" value="UniProtKB-SubCell"/>
</dbReference>
<dbReference type="GO" id="GO:0003954">
    <property type="term" value="F:NADH dehydrogenase activity"/>
    <property type="evidence" value="ECO:0007669"/>
    <property type="project" value="TreeGrafter"/>
</dbReference>
<dbReference type="GO" id="GO:0016655">
    <property type="term" value="F:oxidoreductase activity, acting on NAD(P)H, quinone or similar compound as acceptor"/>
    <property type="evidence" value="ECO:0007669"/>
    <property type="project" value="UniProtKB-UniRule"/>
</dbReference>
<dbReference type="GO" id="GO:0048038">
    <property type="term" value="F:quinone binding"/>
    <property type="evidence" value="ECO:0007669"/>
    <property type="project" value="UniProtKB-KW"/>
</dbReference>
<dbReference type="GO" id="GO:0009060">
    <property type="term" value="P:aerobic respiration"/>
    <property type="evidence" value="ECO:0007669"/>
    <property type="project" value="TreeGrafter"/>
</dbReference>
<dbReference type="HAMAP" id="MF_01350">
    <property type="entry name" value="NDH1_NuoH"/>
    <property type="match status" value="1"/>
</dbReference>
<dbReference type="InterPro" id="IPR001694">
    <property type="entry name" value="NADH_UbQ_OxRdtase_su1/FPO"/>
</dbReference>
<dbReference type="InterPro" id="IPR018086">
    <property type="entry name" value="NADH_UbQ_OxRdtase_su1_CS"/>
</dbReference>
<dbReference type="NCBIfam" id="NF004741">
    <property type="entry name" value="PRK06076.1-2"/>
    <property type="match status" value="1"/>
</dbReference>
<dbReference type="NCBIfam" id="NF004742">
    <property type="entry name" value="PRK06076.1-3"/>
    <property type="match status" value="1"/>
</dbReference>
<dbReference type="PANTHER" id="PTHR11432">
    <property type="entry name" value="NADH DEHYDROGENASE SUBUNIT 1"/>
    <property type="match status" value="1"/>
</dbReference>
<dbReference type="PANTHER" id="PTHR11432:SF3">
    <property type="entry name" value="NADH-UBIQUINONE OXIDOREDUCTASE CHAIN 1"/>
    <property type="match status" value="1"/>
</dbReference>
<dbReference type="Pfam" id="PF00146">
    <property type="entry name" value="NADHdh"/>
    <property type="match status" value="1"/>
</dbReference>
<dbReference type="PROSITE" id="PS00667">
    <property type="entry name" value="COMPLEX1_ND1_1"/>
    <property type="match status" value="1"/>
</dbReference>
<dbReference type="PROSITE" id="PS00668">
    <property type="entry name" value="COMPLEX1_ND1_2"/>
    <property type="match status" value="1"/>
</dbReference>
<name>NUOH_ACISJ</name>